<evidence type="ECO:0000269" key="1">
    <source>
    </source>
</evidence>
<evidence type="ECO:0000269" key="2">
    <source>
    </source>
</evidence>
<evidence type="ECO:0000305" key="3"/>
<comment type="function">
    <text evidence="1 2">Catalyzes the addition of a mannose residue from GDP-D-mannose to GlcAGroAc2 to generate 1,2-di-O-C16/C18:1-(alpha-D-mannopyranosyl)-(1-4)-(alpha-D-glucopyranosyluronic acid)-(1-3)-glycerol(ManGlcAGroAc2).</text>
</comment>
<comment type="pathway">
    <text>Phospholipid metabolism; phosphatidylinositol metabolism.</text>
</comment>
<comment type="similarity">
    <text evidence="3">Belongs to the glycosyltransferase group 1 family.</text>
</comment>
<feature type="chain" id="PRO_0000393730" description="GDP-mannose-dependent alpha-mannosyltransferase">
    <location>
        <begin position="1"/>
        <end position="413"/>
    </location>
</feature>
<accession>Q8NT41</accession>
<accession>Q6M7Q4</accession>
<gene>
    <name type="primary">mgtA</name>
    <name type="ordered locus">Cgl0469</name>
    <name type="ordered locus">cg0554</name>
</gene>
<proteinExistence type="evidence at protein level"/>
<name>MGTA_CORGL</name>
<organism>
    <name type="scientific">Corynebacterium glutamicum (strain ATCC 13032 / DSM 20300 / JCM 1318 / BCRC 11384 / CCUG 27702 / LMG 3730 / NBRC 12168 / NCIMB 10025 / NRRL B-2784 / 534)</name>
    <dbReference type="NCBI Taxonomy" id="196627"/>
    <lineage>
        <taxon>Bacteria</taxon>
        <taxon>Bacillati</taxon>
        <taxon>Actinomycetota</taxon>
        <taxon>Actinomycetes</taxon>
        <taxon>Mycobacteriales</taxon>
        <taxon>Corynebacteriaceae</taxon>
        <taxon>Corynebacterium</taxon>
    </lineage>
</organism>
<keyword id="KW-0328">Glycosyltransferase</keyword>
<keyword id="KW-0444">Lipid biosynthesis</keyword>
<keyword id="KW-0443">Lipid metabolism</keyword>
<keyword id="KW-0594">Phospholipid biosynthesis</keyword>
<keyword id="KW-1208">Phospholipid metabolism</keyword>
<keyword id="KW-1185">Reference proteome</keyword>
<keyword id="KW-0808">Transferase</keyword>
<protein>
    <recommendedName>
        <fullName>GDP-mannose-dependent alpha-mannosyltransferase</fullName>
        <ecNumber>2.4.1.-</ecNumber>
    </recommendedName>
    <alternativeName>
        <fullName>Guanosine diphosphomannose-dependent alpha-mannosyltransferase</fullName>
    </alternativeName>
</protein>
<dbReference type="EC" id="2.4.1.-"/>
<dbReference type="EMBL" id="BA000036">
    <property type="protein sequence ID" value="BAB97862.1"/>
    <property type="molecule type" value="Genomic_DNA"/>
</dbReference>
<dbReference type="EMBL" id="BX927149">
    <property type="protein sequence ID" value="CAF19183.1"/>
    <property type="molecule type" value="Genomic_DNA"/>
</dbReference>
<dbReference type="RefSeq" id="NP_599714.1">
    <property type="nucleotide sequence ID" value="NC_003450.3"/>
</dbReference>
<dbReference type="SMR" id="Q8NT41"/>
<dbReference type="STRING" id="196627.cg0554"/>
<dbReference type="CAZy" id="GT4">
    <property type="family name" value="Glycosyltransferase Family 4"/>
</dbReference>
<dbReference type="KEGG" id="cgb:cg0554"/>
<dbReference type="KEGG" id="cgl:Cgl0469"/>
<dbReference type="PATRIC" id="fig|196627.13.peg.467"/>
<dbReference type="eggNOG" id="COG0438">
    <property type="taxonomic scope" value="Bacteria"/>
</dbReference>
<dbReference type="eggNOG" id="COG0707">
    <property type="taxonomic scope" value="Bacteria"/>
</dbReference>
<dbReference type="HOGENOM" id="CLU_009583_2_0_11"/>
<dbReference type="OrthoDB" id="9802525at2"/>
<dbReference type="BioCyc" id="CORYNE:G18NG-10026-MONOMER"/>
<dbReference type="UniPathway" id="UPA00949"/>
<dbReference type="Proteomes" id="UP000000582">
    <property type="component" value="Chromosome"/>
</dbReference>
<dbReference type="Proteomes" id="UP000001009">
    <property type="component" value="Chromosome"/>
</dbReference>
<dbReference type="GO" id="GO:0016020">
    <property type="term" value="C:membrane"/>
    <property type="evidence" value="ECO:0007669"/>
    <property type="project" value="GOC"/>
</dbReference>
<dbReference type="GO" id="GO:0000030">
    <property type="term" value="F:mannosyltransferase activity"/>
    <property type="evidence" value="ECO:0000314"/>
    <property type="project" value="UniProtKB"/>
</dbReference>
<dbReference type="GO" id="GO:0009247">
    <property type="term" value="P:glycolipid biosynthetic process"/>
    <property type="evidence" value="ECO:0000314"/>
    <property type="project" value="UniProtKB"/>
</dbReference>
<dbReference type="GO" id="GO:0046488">
    <property type="term" value="P:phosphatidylinositol metabolic process"/>
    <property type="evidence" value="ECO:0007669"/>
    <property type="project" value="UniProtKB-UniPathway"/>
</dbReference>
<dbReference type="GO" id="GO:0008654">
    <property type="term" value="P:phospholipid biosynthetic process"/>
    <property type="evidence" value="ECO:0007669"/>
    <property type="project" value="UniProtKB-KW"/>
</dbReference>
<dbReference type="CDD" id="cd03814">
    <property type="entry name" value="GT4-like"/>
    <property type="match status" value="1"/>
</dbReference>
<dbReference type="FunFam" id="3.40.50.2000:FF:000145">
    <property type="entry name" value="Probable glycosyl transferase"/>
    <property type="match status" value="1"/>
</dbReference>
<dbReference type="Gene3D" id="3.40.50.2000">
    <property type="entry name" value="Glycogen Phosphorylase B"/>
    <property type="match status" value="2"/>
</dbReference>
<dbReference type="InterPro" id="IPR001296">
    <property type="entry name" value="Glyco_trans_1"/>
</dbReference>
<dbReference type="InterPro" id="IPR028098">
    <property type="entry name" value="Glyco_trans_4-like_N"/>
</dbReference>
<dbReference type="InterPro" id="IPR050194">
    <property type="entry name" value="Glycosyltransferase_grp1"/>
</dbReference>
<dbReference type="PANTHER" id="PTHR45947">
    <property type="entry name" value="SULFOQUINOVOSYL TRANSFERASE SQD2"/>
    <property type="match status" value="1"/>
</dbReference>
<dbReference type="PANTHER" id="PTHR45947:SF3">
    <property type="entry name" value="SULFOQUINOVOSYL TRANSFERASE SQD2"/>
    <property type="match status" value="1"/>
</dbReference>
<dbReference type="Pfam" id="PF13439">
    <property type="entry name" value="Glyco_transf_4"/>
    <property type="match status" value="1"/>
</dbReference>
<dbReference type="Pfam" id="PF00534">
    <property type="entry name" value="Glycos_transf_1"/>
    <property type="match status" value="1"/>
</dbReference>
<dbReference type="SUPFAM" id="SSF53756">
    <property type="entry name" value="UDP-Glycosyltransferase/glycogen phosphorylase"/>
    <property type="match status" value="1"/>
</dbReference>
<reference key="1">
    <citation type="journal article" date="2003" name="Appl. Microbiol. Biotechnol.">
        <title>The Corynebacterium glutamicum genome: features and impacts on biotechnological processes.</title>
        <authorList>
            <person name="Ikeda M."/>
            <person name="Nakagawa S."/>
        </authorList>
    </citation>
    <scope>NUCLEOTIDE SEQUENCE [LARGE SCALE GENOMIC DNA]</scope>
    <source>
        <strain>ATCC 13032 / DSM 20300 / JCM 1318 / BCRC 11384 / CCUG 27702 / LMG 3730 / NBRC 12168 / NCIMB 10025 / NRRL B-2784 / 534</strain>
    </source>
</reference>
<reference key="2">
    <citation type="journal article" date="2003" name="J. Biotechnol.">
        <title>The complete Corynebacterium glutamicum ATCC 13032 genome sequence and its impact on the production of L-aspartate-derived amino acids and vitamins.</title>
        <authorList>
            <person name="Kalinowski J."/>
            <person name="Bathe B."/>
            <person name="Bartels D."/>
            <person name="Bischoff N."/>
            <person name="Bott M."/>
            <person name="Burkovski A."/>
            <person name="Dusch N."/>
            <person name="Eggeling L."/>
            <person name="Eikmanns B.J."/>
            <person name="Gaigalat L."/>
            <person name="Goesmann A."/>
            <person name="Hartmann M."/>
            <person name="Huthmacher K."/>
            <person name="Kraemer R."/>
            <person name="Linke B."/>
            <person name="McHardy A.C."/>
            <person name="Meyer F."/>
            <person name="Moeckel B."/>
            <person name="Pfefferle W."/>
            <person name="Puehler A."/>
            <person name="Rey D.A."/>
            <person name="Rueckert C."/>
            <person name="Rupp O."/>
            <person name="Sahm H."/>
            <person name="Wendisch V.F."/>
            <person name="Wiegraebe I."/>
            <person name="Tauch A."/>
        </authorList>
    </citation>
    <scope>NUCLEOTIDE SEQUENCE [LARGE SCALE GENOMIC DNA]</scope>
    <source>
        <strain>ATCC 13032 / DSM 20300 / JCM 1318 / BCRC 11384 / CCUG 27702 / LMG 3730 / NBRC 12168 / NCIMB 10025 / NRRL B-2784 / 534</strain>
    </source>
</reference>
<reference key="3">
    <citation type="journal article" date="2007" name="J. Biol. Chem.">
        <title>Inactivation of Corynebacterium glutamicum NCgl0452 and the role of MgtA in the biosynthesis of a novel mannosylated glycolipid involved in lipomannan biosynthesis.</title>
        <authorList>
            <person name="Tatituri R.V."/>
            <person name="Illarionov P.A."/>
            <person name="Dover L.G."/>
            <person name="Nigou J."/>
            <person name="Gilleron M."/>
            <person name="Hitchen P."/>
            <person name="Krumbach K."/>
            <person name="Morris H.R."/>
            <person name="Spencer N."/>
            <person name="Dell A."/>
            <person name="Eggeling L."/>
            <person name="Besra G.S."/>
        </authorList>
    </citation>
    <scope>FUNCTION AS MANNOSYLTRANSFERASE</scope>
    <scope>NOMENCLATURE</scope>
</reference>
<reference key="4">
    <citation type="journal article" date="2009" name="J. Bacteriol.">
        <title>Characterization of the Corynebacterium glutamicum deltapimB' deltamgtA double deletion mutant and the role of Mycobacterium tuberculosis orthologues Rv2188c and Rv0557 in glycolipid biosynthesis.</title>
        <authorList>
            <person name="Mishra A.K."/>
            <person name="Batt S."/>
            <person name="Krumbach K."/>
            <person name="Eggeling L."/>
            <person name="Besra G.S."/>
        </authorList>
    </citation>
    <scope>FUNCTION IN MANGLCAGROAC2 BIOSYNTHESIS</scope>
</reference>
<sequence length="413" mass="44919">MEIIRPMRVAIVAESFLPNVNGVTNSVLRVLEHLKANGHDALVIAPGARDFEEEIGHYLGFEIVRVPTVRVPLIDSLPIGVPLPSVTSVLREYNPDIIHLASPFVLGGAAAFAARQLRIPAIAIYQTDVAGFSQRYHLAPLATASWEWIKTVHNMCQRTLAPSSMSIDELRDHGINDIFHWARGVDSKRFHPGKRSVALRKSWDPSGAKKIVGFVGRLASEKGVECLAGLSGRSDIQLVIVGDGPEAKYLQEMMPDAIFTGALGGEELATTYASLDLFVHPGEFETFCQAIQEAQASGVPTIGPRAGGPIDLINEGVNGLLLDVVDFKETLPAAAEWILDDSRHSEMCAAAWEGVKDKTWEALCTQLLQHYADVIALSQRIPLTFFGPSAEVAKLPLWVARALGVRTRISIEA</sequence>